<sequence>MKVVHVVRQFHPSIGGMEEVVLNVARQHQATSADTVEVVTLDRVFTDPSGRLSAHDTHQGLPIRRIGYRGSSRYPLAPSVLDAIRSADVVHLHGIDFFYDYLALTKPLHGKPMVVSTHGGFFHTAYASCMKQLWFQTLTRISALAYARVIATSENDGDLFAEVVAPSRLRVIENGVDVQKYAGQGATTPGRTMLYFGRWSVNKGLIETLALLQAALKRDPQWRLIIAGREYDLNESDLRKAIAERGLQDKVQLSMSPSQEQLRALMQQAQFFVCLSRHEGFGIAAVEAMSAGLIPILSDIPPFVRLASESGQGVIVNRDKIEAAADQVQALALHADNDFDTRRTASMAYVSRYDWKHVVGRYIDEYHDALGIPRVQEAVR</sequence>
<proteinExistence type="inferred from homology"/>
<organism>
    <name type="scientific">Xanthomonas oryzae pv. oryzae (strain PXO99A)</name>
    <dbReference type="NCBI Taxonomy" id="360094"/>
    <lineage>
        <taxon>Bacteria</taxon>
        <taxon>Pseudomonadati</taxon>
        <taxon>Pseudomonadota</taxon>
        <taxon>Gammaproteobacteria</taxon>
        <taxon>Lysobacterales</taxon>
        <taxon>Lysobacteraceae</taxon>
        <taxon>Xanthomonas</taxon>
    </lineage>
</organism>
<accession>B2SUK8</accession>
<evidence type="ECO:0000269" key="1">
    <source>
    </source>
</evidence>
<evidence type="ECO:0000305" key="2"/>
<name>GUMH_XANOP</name>
<protein>
    <recommendedName>
        <fullName>GDP-mannose:cellobiosyl-diphosphopolyprenol alpha-mannosyltransferase</fullName>
        <ecNumber>2.4.1.252</ecNumber>
    </recommendedName>
    <alternativeName>
        <fullName>Exopolysaccharide xanthan biosynthesis glycosyltransferase GumH</fullName>
    </alternativeName>
</protein>
<comment type="function">
    <text evidence="1">Involved in the biosynthesis of the exopolysaccharide xanthan, a polymer that is comprised of repeating pentasaccharide units with the structure of a beta-(1,4)-linked D-glucose backbone with trisaccharide side chains composed of mannose-beta-(1,4)-glucuronic acid-beta-(1,2)-mannose attached to alternate glucose residues in the backbone by alpha-(1,3) linkages. Xanthan is involved in pathogenicity but has also been used in a variety of applications as a specialty polymer for commercial applications, including food additives, where they act as viscosifying, stabilizing, emulsifying, or gelling agents.</text>
</comment>
<comment type="catalytic activity">
    <reaction>
        <text>beta-D-Glc-(1-&gt;4)-alpha-D-Glc-di-trans,octa-cis-undecaprenyl diphosphate + GDP-alpha-D-mannose = alpha-D-Man-(1-&gt;3)-beta-D-Glc-(1-&gt;4)-alpha-D-Glc-1-di-trans,octa-cis-undecaprenyl diphosphate + GDP + H(+)</text>
        <dbReference type="Rhea" id="RHEA:28310"/>
        <dbReference type="ChEBI" id="CHEBI:15378"/>
        <dbReference type="ChEBI" id="CHEBI:57527"/>
        <dbReference type="ChEBI" id="CHEBI:58189"/>
        <dbReference type="ChEBI" id="CHEBI:61247"/>
        <dbReference type="ChEBI" id="CHEBI:61252"/>
        <dbReference type="EC" id="2.4.1.252"/>
    </reaction>
</comment>
<comment type="similarity">
    <text evidence="2">Belongs to the glycosyltransferase group 1 family. Glycosyltransferase 4 subfamily.</text>
</comment>
<feature type="chain" id="PRO_0000424205" description="GDP-mannose:cellobiosyl-diphosphopolyprenol alpha-mannosyltransferase">
    <location>
        <begin position="1"/>
        <end position="380"/>
    </location>
</feature>
<gene>
    <name type="primary">gumH</name>
    <name type="ordered locus">PXO_01398</name>
</gene>
<dbReference type="EC" id="2.4.1.252"/>
<dbReference type="EMBL" id="CP000967">
    <property type="protein sequence ID" value="ACD59981.1"/>
    <property type="molecule type" value="Genomic_DNA"/>
</dbReference>
<dbReference type="RefSeq" id="WP_011259696.1">
    <property type="nucleotide sequence ID" value="NC_010717.2"/>
</dbReference>
<dbReference type="SMR" id="B2SUK8"/>
<dbReference type="CAZy" id="GT4">
    <property type="family name" value="Glycosyltransferase Family 4"/>
</dbReference>
<dbReference type="KEGG" id="xop:PXO_01398"/>
<dbReference type="eggNOG" id="COG0438">
    <property type="taxonomic scope" value="Bacteria"/>
</dbReference>
<dbReference type="HOGENOM" id="CLU_739069_0_0_6"/>
<dbReference type="Proteomes" id="UP000001740">
    <property type="component" value="Chromosome"/>
</dbReference>
<dbReference type="GO" id="GO:0016757">
    <property type="term" value="F:glycosyltransferase activity"/>
    <property type="evidence" value="ECO:0007669"/>
    <property type="project" value="UniProtKB-KW"/>
</dbReference>
<dbReference type="GO" id="GO:0000271">
    <property type="term" value="P:polysaccharide biosynthetic process"/>
    <property type="evidence" value="ECO:0007669"/>
    <property type="project" value="UniProtKB-KW"/>
</dbReference>
<dbReference type="CDD" id="cd03801">
    <property type="entry name" value="GT4_PimA-like"/>
    <property type="match status" value="1"/>
</dbReference>
<dbReference type="Gene3D" id="3.40.50.2000">
    <property type="entry name" value="Glycogen Phosphorylase B"/>
    <property type="match status" value="2"/>
</dbReference>
<dbReference type="InterPro" id="IPR001296">
    <property type="entry name" value="Glyco_trans_1"/>
</dbReference>
<dbReference type="InterPro" id="IPR028098">
    <property type="entry name" value="Glyco_trans_4-like_N"/>
</dbReference>
<dbReference type="InterPro" id="IPR050194">
    <property type="entry name" value="Glycosyltransferase_grp1"/>
</dbReference>
<dbReference type="PANTHER" id="PTHR45947">
    <property type="entry name" value="SULFOQUINOVOSYL TRANSFERASE SQD2"/>
    <property type="match status" value="1"/>
</dbReference>
<dbReference type="PANTHER" id="PTHR45947:SF3">
    <property type="entry name" value="SULFOQUINOVOSYL TRANSFERASE SQD2"/>
    <property type="match status" value="1"/>
</dbReference>
<dbReference type="Pfam" id="PF13439">
    <property type="entry name" value="Glyco_transf_4"/>
    <property type="match status" value="1"/>
</dbReference>
<dbReference type="Pfam" id="PF00534">
    <property type="entry name" value="Glycos_transf_1"/>
    <property type="match status" value="1"/>
</dbReference>
<dbReference type="SUPFAM" id="SSF53756">
    <property type="entry name" value="UDP-Glycosyltransferase/glycogen phosphorylase"/>
    <property type="match status" value="1"/>
</dbReference>
<keyword id="KW-0270">Exopolysaccharide synthesis</keyword>
<keyword id="KW-0328">Glycosyltransferase</keyword>
<keyword id="KW-0808">Transferase</keyword>
<reference key="1">
    <citation type="journal article" date="2008" name="BMC Genomics">
        <title>Genome sequence and rapid evolution of the rice pathogen Xanthomonas oryzae pv. oryzae PXO99A.</title>
        <authorList>
            <person name="Salzberg S.L."/>
            <person name="Sommer D.D."/>
            <person name="Schatz M.C."/>
            <person name="Phillippy A.M."/>
            <person name="Rabinowicz P.D."/>
            <person name="Tsuge S."/>
            <person name="Furutani A."/>
            <person name="Ochiai H."/>
            <person name="Delcher A.L."/>
            <person name="Kelley D."/>
            <person name="Madupu R."/>
            <person name="Puiu D."/>
            <person name="Radune D."/>
            <person name="Shumway M."/>
            <person name="Trapnell C."/>
            <person name="Aparna G."/>
            <person name="Jha G."/>
            <person name="Pandey A."/>
            <person name="Patil P.B."/>
            <person name="Ishihara H."/>
            <person name="Meyer D.F."/>
            <person name="Szurek B."/>
            <person name="Verdier V."/>
            <person name="Koebnik R."/>
            <person name="Dow J.M."/>
            <person name="Ryan R.P."/>
            <person name="Hirata H."/>
            <person name="Tsuyumu S."/>
            <person name="Won Lee S."/>
            <person name="Seo Y.-S."/>
            <person name="Sriariyanum M."/>
            <person name="Ronald P.C."/>
            <person name="Sonti R.V."/>
            <person name="Van Sluys M.-A."/>
            <person name="Leach J.E."/>
            <person name="White F.F."/>
            <person name="Bogdanove A.J."/>
        </authorList>
    </citation>
    <scope>NUCLEOTIDE SEQUENCE [LARGE SCALE GENOMIC DNA]</scope>
    <source>
        <strain>PXO99A</strain>
    </source>
</reference>
<reference key="2">
    <citation type="journal article" date="2009" name="Biotechnol. Lett.">
        <title>Mutational analysis of the gum gene cluster required for xanthan biosynthesis in Xanthomonas oryzae pv oryzae.</title>
        <authorList>
            <person name="Kim S.Y."/>
            <person name="Kim J.G."/>
            <person name="Lee B.M."/>
            <person name="Cho J.Y."/>
        </authorList>
    </citation>
    <scope>FUNCTION</scope>
</reference>